<accession>A1SVE8</accession>
<keyword id="KW-0028">Amino-acid biosynthesis</keyword>
<keyword id="KW-0100">Branched-chain amino acid biosynthesis</keyword>
<keyword id="KW-0432">Leucine biosynthesis</keyword>
<keyword id="KW-0456">Lyase</keyword>
<keyword id="KW-1185">Reference proteome</keyword>
<evidence type="ECO:0000255" key="1">
    <source>
        <dbReference type="HAMAP-Rule" id="MF_01031"/>
    </source>
</evidence>
<organism>
    <name type="scientific">Psychromonas ingrahamii (strain DSM 17664 / CCUG 51855 / 37)</name>
    <dbReference type="NCBI Taxonomy" id="357804"/>
    <lineage>
        <taxon>Bacteria</taxon>
        <taxon>Pseudomonadati</taxon>
        <taxon>Pseudomonadota</taxon>
        <taxon>Gammaproteobacteria</taxon>
        <taxon>Alteromonadales</taxon>
        <taxon>Psychromonadaceae</taxon>
        <taxon>Psychromonas</taxon>
    </lineage>
</organism>
<gene>
    <name evidence="1" type="primary">leuD</name>
    <name type="ordered locus">Ping_1670</name>
</gene>
<dbReference type="EC" id="4.2.1.33" evidence="1"/>
<dbReference type="EMBL" id="CP000510">
    <property type="protein sequence ID" value="ABM03463.1"/>
    <property type="molecule type" value="Genomic_DNA"/>
</dbReference>
<dbReference type="RefSeq" id="WP_011770023.1">
    <property type="nucleotide sequence ID" value="NC_008709.1"/>
</dbReference>
<dbReference type="SMR" id="A1SVE8"/>
<dbReference type="STRING" id="357804.Ping_1670"/>
<dbReference type="KEGG" id="pin:Ping_1670"/>
<dbReference type="eggNOG" id="COG0066">
    <property type="taxonomic scope" value="Bacteria"/>
</dbReference>
<dbReference type="HOGENOM" id="CLU_081378_0_3_6"/>
<dbReference type="OrthoDB" id="9777465at2"/>
<dbReference type="UniPathway" id="UPA00048">
    <property type="reaction ID" value="UER00071"/>
</dbReference>
<dbReference type="Proteomes" id="UP000000639">
    <property type="component" value="Chromosome"/>
</dbReference>
<dbReference type="GO" id="GO:0009316">
    <property type="term" value="C:3-isopropylmalate dehydratase complex"/>
    <property type="evidence" value="ECO:0007669"/>
    <property type="project" value="InterPro"/>
</dbReference>
<dbReference type="GO" id="GO:0003861">
    <property type="term" value="F:3-isopropylmalate dehydratase activity"/>
    <property type="evidence" value="ECO:0007669"/>
    <property type="project" value="UniProtKB-UniRule"/>
</dbReference>
<dbReference type="GO" id="GO:0009098">
    <property type="term" value="P:L-leucine biosynthetic process"/>
    <property type="evidence" value="ECO:0007669"/>
    <property type="project" value="UniProtKB-UniRule"/>
</dbReference>
<dbReference type="CDD" id="cd01577">
    <property type="entry name" value="IPMI_Swivel"/>
    <property type="match status" value="1"/>
</dbReference>
<dbReference type="FunFam" id="3.20.19.10:FF:000003">
    <property type="entry name" value="3-isopropylmalate dehydratase small subunit"/>
    <property type="match status" value="1"/>
</dbReference>
<dbReference type="Gene3D" id="3.20.19.10">
    <property type="entry name" value="Aconitase, domain 4"/>
    <property type="match status" value="1"/>
</dbReference>
<dbReference type="HAMAP" id="MF_01031">
    <property type="entry name" value="LeuD_type1"/>
    <property type="match status" value="1"/>
</dbReference>
<dbReference type="InterPro" id="IPR004431">
    <property type="entry name" value="3-IsopropMal_deHydase_ssu"/>
</dbReference>
<dbReference type="InterPro" id="IPR015928">
    <property type="entry name" value="Aconitase/3IPM_dehydase_swvl"/>
</dbReference>
<dbReference type="InterPro" id="IPR000573">
    <property type="entry name" value="AconitaseA/IPMdHydase_ssu_swvl"/>
</dbReference>
<dbReference type="InterPro" id="IPR033940">
    <property type="entry name" value="IPMI_Swivel"/>
</dbReference>
<dbReference type="InterPro" id="IPR050075">
    <property type="entry name" value="LeuD"/>
</dbReference>
<dbReference type="NCBIfam" id="TIGR00171">
    <property type="entry name" value="leuD"/>
    <property type="match status" value="1"/>
</dbReference>
<dbReference type="NCBIfam" id="NF002458">
    <property type="entry name" value="PRK01641.1"/>
    <property type="match status" value="1"/>
</dbReference>
<dbReference type="PANTHER" id="PTHR43345:SF5">
    <property type="entry name" value="3-ISOPROPYLMALATE DEHYDRATASE SMALL SUBUNIT"/>
    <property type="match status" value="1"/>
</dbReference>
<dbReference type="PANTHER" id="PTHR43345">
    <property type="entry name" value="3-ISOPROPYLMALATE DEHYDRATASE SMALL SUBUNIT 2-RELATED-RELATED"/>
    <property type="match status" value="1"/>
</dbReference>
<dbReference type="Pfam" id="PF00694">
    <property type="entry name" value="Aconitase_C"/>
    <property type="match status" value="1"/>
</dbReference>
<dbReference type="SUPFAM" id="SSF52016">
    <property type="entry name" value="LeuD/IlvD-like"/>
    <property type="match status" value="1"/>
</dbReference>
<sequence length="204" mass="23016">MEAYKKHTSIAALMNRSNVDTDQIIPTQFLKKVERTGFGIHLFHDWRFLADNVTPNPEFELNKPVFKGAKILVTGDNFGCGSSREHAPWAIADYGFNTVISTSFADIFYTNCFKNALLPIRVSKDELAALMAEISANEGVKFTVDLEAEKLTTPGGIVIHIEVDPFRKESLLGGLDDIAWTLKHEDKITAFEEKQKQTLPWLWK</sequence>
<feature type="chain" id="PRO_1000063811" description="3-isopropylmalate dehydratase small subunit">
    <location>
        <begin position="1"/>
        <end position="204"/>
    </location>
</feature>
<protein>
    <recommendedName>
        <fullName evidence="1">3-isopropylmalate dehydratase small subunit</fullName>
        <ecNumber evidence="1">4.2.1.33</ecNumber>
    </recommendedName>
    <alternativeName>
        <fullName evidence="1">Alpha-IPM isomerase</fullName>
        <shortName evidence="1">IPMI</shortName>
    </alternativeName>
    <alternativeName>
        <fullName evidence="1">Isopropylmalate isomerase</fullName>
    </alternativeName>
</protein>
<reference key="1">
    <citation type="journal article" date="2008" name="BMC Genomics">
        <title>Genomics of an extreme psychrophile, Psychromonas ingrahamii.</title>
        <authorList>
            <person name="Riley M."/>
            <person name="Staley J.T."/>
            <person name="Danchin A."/>
            <person name="Wang T.Z."/>
            <person name="Brettin T.S."/>
            <person name="Hauser L.J."/>
            <person name="Land M.L."/>
            <person name="Thompson L.S."/>
        </authorList>
    </citation>
    <scope>NUCLEOTIDE SEQUENCE [LARGE SCALE GENOMIC DNA]</scope>
    <source>
        <strain>DSM 17664 / CCUG 51855 / 37</strain>
    </source>
</reference>
<name>LEUD_PSYIN</name>
<comment type="function">
    <text evidence="1">Catalyzes the isomerization between 2-isopropylmalate and 3-isopropylmalate, via the formation of 2-isopropylmaleate.</text>
</comment>
<comment type="catalytic activity">
    <reaction evidence="1">
        <text>(2R,3S)-3-isopropylmalate = (2S)-2-isopropylmalate</text>
        <dbReference type="Rhea" id="RHEA:32287"/>
        <dbReference type="ChEBI" id="CHEBI:1178"/>
        <dbReference type="ChEBI" id="CHEBI:35121"/>
        <dbReference type="EC" id="4.2.1.33"/>
    </reaction>
</comment>
<comment type="pathway">
    <text evidence="1">Amino-acid biosynthesis; L-leucine biosynthesis; L-leucine from 3-methyl-2-oxobutanoate: step 2/4.</text>
</comment>
<comment type="subunit">
    <text evidence="1">Heterodimer of LeuC and LeuD.</text>
</comment>
<comment type="similarity">
    <text evidence="1">Belongs to the LeuD family. LeuD type 1 subfamily.</text>
</comment>
<proteinExistence type="inferred from homology"/>